<name>GSA_METTH</name>
<feature type="chain" id="PRO_0000120486" description="Glutamate-1-semialdehyde 2,1-aminomutase">
    <location>
        <begin position="1"/>
        <end position="420"/>
    </location>
</feature>
<feature type="modified residue" description="N6-(pyridoxal phosphate)lysine" evidence="1">
    <location>
        <position position="259"/>
    </location>
</feature>
<sequence>MKSEELFRRASNVLPGGVSSPVRRFDPHPFFAAGGSGCLLESVDGESYIDYCLAYGPLILGHAHPRVVEAVNEQIKRGTTYGVPTEGEIELAEAIIERVPCAEMVRFTNSGTEATMAAVRLARAFTGRDRIVKFEGSYHGAHDYVLVRPGSGAATAPDSPGIPVDTVRNTLTVPFNHEEAMAELIEGAGEDIACILVEPVMGNIGCIEPENGYLQFLRDITRENDIILIFDEVITGFRLAPGGAQEYYRVEPDLVTLGKIVGGGFPMGALAGRREIMENISPAGNVYQAGTFNGNPVSVTAGRETLRLLDGRMYSDLERKGSTLRAGLRDLLSDLDLEYQVTGPASMFQLYFTGEEVRNYGDAKKSDTVLFMEYFHGLLERGVFIPPSQFECCFISAAHESEHIEATLEAAEEVLSGLKN</sequence>
<proteinExistence type="inferred from homology"/>
<gene>
    <name type="primary">hemL</name>
    <name type="ordered locus">MTH_228</name>
</gene>
<keyword id="KW-0963">Cytoplasm</keyword>
<keyword id="KW-0413">Isomerase</keyword>
<keyword id="KW-0627">Porphyrin biosynthesis</keyword>
<keyword id="KW-0663">Pyridoxal phosphate</keyword>
<keyword id="KW-1185">Reference proteome</keyword>
<organism>
    <name type="scientific">Methanothermobacter thermautotrophicus (strain ATCC 29096 / DSM 1053 / JCM 10044 / NBRC 100330 / Delta H)</name>
    <name type="common">Methanobacterium thermoautotrophicum</name>
    <dbReference type="NCBI Taxonomy" id="187420"/>
    <lineage>
        <taxon>Archaea</taxon>
        <taxon>Methanobacteriati</taxon>
        <taxon>Methanobacteriota</taxon>
        <taxon>Methanomada group</taxon>
        <taxon>Methanobacteria</taxon>
        <taxon>Methanobacteriales</taxon>
        <taxon>Methanobacteriaceae</taxon>
        <taxon>Methanothermobacter</taxon>
    </lineage>
</organism>
<reference key="1">
    <citation type="journal article" date="1997" name="J. Bacteriol.">
        <title>Complete genome sequence of Methanobacterium thermoautotrophicum deltaH: functional analysis and comparative genomics.</title>
        <authorList>
            <person name="Smith D.R."/>
            <person name="Doucette-Stamm L.A."/>
            <person name="Deloughery C."/>
            <person name="Lee H.-M."/>
            <person name="Dubois J."/>
            <person name="Aldredge T."/>
            <person name="Bashirzadeh R."/>
            <person name="Blakely D."/>
            <person name="Cook R."/>
            <person name="Gilbert K."/>
            <person name="Harrison D."/>
            <person name="Hoang L."/>
            <person name="Keagle P."/>
            <person name="Lumm W."/>
            <person name="Pothier B."/>
            <person name="Qiu D."/>
            <person name="Spadafora R."/>
            <person name="Vicare R."/>
            <person name="Wang Y."/>
            <person name="Wierzbowski J."/>
            <person name="Gibson R."/>
            <person name="Jiwani N."/>
            <person name="Caruso A."/>
            <person name="Bush D."/>
            <person name="Safer H."/>
            <person name="Patwell D."/>
            <person name="Prabhakar S."/>
            <person name="McDougall S."/>
            <person name="Shimer G."/>
            <person name="Goyal A."/>
            <person name="Pietrovski S."/>
            <person name="Church G.M."/>
            <person name="Daniels C.J."/>
            <person name="Mao J.-I."/>
            <person name="Rice P."/>
            <person name="Noelling J."/>
            <person name="Reeve J.N."/>
        </authorList>
    </citation>
    <scope>NUCLEOTIDE SEQUENCE [LARGE SCALE GENOMIC DNA]</scope>
    <source>
        <strain>ATCC 29096 / DSM 1053 / JCM 10044 / NBRC 100330 / Delta H</strain>
    </source>
</reference>
<accession>O26330</accession>
<dbReference type="EC" id="5.4.3.8"/>
<dbReference type="EMBL" id="AE000666">
    <property type="protein sequence ID" value="AAB84734.1"/>
    <property type="molecule type" value="Genomic_DNA"/>
</dbReference>
<dbReference type="PIR" id="C69128">
    <property type="entry name" value="C69128"/>
</dbReference>
<dbReference type="RefSeq" id="WP_010875867.1">
    <property type="nucleotide sequence ID" value="NC_000916.1"/>
</dbReference>
<dbReference type="SMR" id="O26330"/>
<dbReference type="FunCoup" id="O26330">
    <property type="interactions" value="151"/>
</dbReference>
<dbReference type="STRING" id="187420.MTH_228"/>
<dbReference type="PaxDb" id="187420-MTH_228"/>
<dbReference type="EnsemblBacteria" id="AAB84734">
    <property type="protein sequence ID" value="AAB84734"/>
    <property type="gene ID" value="MTH_228"/>
</dbReference>
<dbReference type="GeneID" id="82296702"/>
<dbReference type="KEGG" id="mth:MTH_228"/>
<dbReference type="PATRIC" id="fig|187420.15.peg.197"/>
<dbReference type="HOGENOM" id="CLU_016922_1_5_2"/>
<dbReference type="InParanoid" id="O26330"/>
<dbReference type="UniPathway" id="UPA00251">
    <property type="reaction ID" value="UER00317"/>
</dbReference>
<dbReference type="Proteomes" id="UP000005223">
    <property type="component" value="Chromosome"/>
</dbReference>
<dbReference type="GO" id="GO:0005737">
    <property type="term" value="C:cytoplasm"/>
    <property type="evidence" value="ECO:0007669"/>
    <property type="project" value="UniProtKB-SubCell"/>
</dbReference>
<dbReference type="GO" id="GO:0042286">
    <property type="term" value="F:glutamate-1-semialdehyde 2,1-aminomutase activity"/>
    <property type="evidence" value="ECO:0007669"/>
    <property type="project" value="UniProtKB-UniRule"/>
</dbReference>
<dbReference type="GO" id="GO:0030170">
    <property type="term" value="F:pyridoxal phosphate binding"/>
    <property type="evidence" value="ECO:0007669"/>
    <property type="project" value="InterPro"/>
</dbReference>
<dbReference type="GO" id="GO:0008483">
    <property type="term" value="F:transaminase activity"/>
    <property type="evidence" value="ECO:0007669"/>
    <property type="project" value="InterPro"/>
</dbReference>
<dbReference type="GO" id="GO:0006782">
    <property type="term" value="P:protoporphyrinogen IX biosynthetic process"/>
    <property type="evidence" value="ECO:0007669"/>
    <property type="project" value="UniProtKB-UniRule"/>
</dbReference>
<dbReference type="CDD" id="cd00610">
    <property type="entry name" value="OAT_like"/>
    <property type="match status" value="1"/>
</dbReference>
<dbReference type="FunFam" id="3.40.640.10:FF:000021">
    <property type="entry name" value="Glutamate-1-semialdehyde 2,1-aminomutase"/>
    <property type="match status" value="1"/>
</dbReference>
<dbReference type="Gene3D" id="3.90.1150.10">
    <property type="entry name" value="Aspartate Aminotransferase, domain 1"/>
    <property type="match status" value="1"/>
</dbReference>
<dbReference type="Gene3D" id="3.40.640.10">
    <property type="entry name" value="Type I PLP-dependent aspartate aminotransferase-like (Major domain)"/>
    <property type="match status" value="1"/>
</dbReference>
<dbReference type="HAMAP" id="MF_00375">
    <property type="entry name" value="HemL_aminotrans_3"/>
    <property type="match status" value="1"/>
</dbReference>
<dbReference type="InterPro" id="IPR004639">
    <property type="entry name" value="4pyrrol_synth_GluAld_NH2Trfase"/>
</dbReference>
<dbReference type="InterPro" id="IPR005814">
    <property type="entry name" value="Aminotrans_3"/>
</dbReference>
<dbReference type="InterPro" id="IPR049704">
    <property type="entry name" value="Aminotrans_3_PPA_site"/>
</dbReference>
<dbReference type="InterPro" id="IPR015424">
    <property type="entry name" value="PyrdxlP-dep_Trfase"/>
</dbReference>
<dbReference type="InterPro" id="IPR015421">
    <property type="entry name" value="PyrdxlP-dep_Trfase_major"/>
</dbReference>
<dbReference type="InterPro" id="IPR015422">
    <property type="entry name" value="PyrdxlP-dep_Trfase_small"/>
</dbReference>
<dbReference type="NCBIfam" id="TIGR00713">
    <property type="entry name" value="hemL"/>
    <property type="match status" value="1"/>
</dbReference>
<dbReference type="NCBIfam" id="NF000818">
    <property type="entry name" value="PRK00062.1"/>
    <property type="match status" value="1"/>
</dbReference>
<dbReference type="PANTHER" id="PTHR43713">
    <property type="entry name" value="GLUTAMATE-1-SEMIALDEHYDE 2,1-AMINOMUTASE"/>
    <property type="match status" value="1"/>
</dbReference>
<dbReference type="PANTHER" id="PTHR43713:SF3">
    <property type="entry name" value="GLUTAMATE-1-SEMIALDEHYDE 2,1-AMINOMUTASE 1, CHLOROPLASTIC-RELATED"/>
    <property type="match status" value="1"/>
</dbReference>
<dbReference type="Pfam" id="PF00202">
    <property type="entry name" value="Aminotran_3"/>
    <property type="match status" value="1"/>
</dbReference>
<dbReference type="SUPFAM" id="SSF53383">
    <property type="entry name" value="PLP-dependent transferases"/>
    <property type="match status" value="1"/>
</dbReference>
<dbReference type="PROSITE" id="PS00600">
    <property type="entry name" value="AA_TRANSFER_CLASS_3"/>
    <property type="match status" value="1"/>
</dbReference>
<evidence type="ECO:0000250" key="1"/>
<evidence type="ECO:0000305" key="2"/>
<comment type="catalytic activity">
    <reaction>
        <text>(S)-4-amino-5-oxopentanoate = 5-aminolevulinate</text>
        <dbReference type="Rhea" id="RHEA:14265"/>
        <dbReference type="ChEBI" id="CHEBI:57501"/>
        <dbReference type="ChEBI" id="CHEBI:356416"/>
        <dbReference type="EC" id="5.4.3.8"/>
    </reaction>
</comment>
<comment type="cofactor">
    <cofactor evidence="1">
        <name>pyridoxal 5'-phosphate</name>
        <dbReference type="ChEBI" id="CHEBI:597326"/>
    </cofactor>
</comment>
<comment type="pathway">
    <text>Porphyrin-containing compound metabolism; protoporphyrin-IX biosynthesis; 5-aminolevulinate from L-glutamyl-tRNA(Glu): step 2/2.</text>
</comment>
<comment type="subcellular location">
    <subcellularLocation>
        <location evidence="2">Cytoplasm</location>
    </subcellularLocation>
</comment>
<comment type="similarity">
    <text evidence="2">Belongs to the class-III pyridoxal-phosphate-dependent aminotransferase family. HemL subfamily.</text>
</comment>
<protein>
    <recommendedName>
        <fullName>Glutamate-1-semialdehyde 2,1-aminomutase</fullName>
        <shortName>GSA</shortName>
        <ecNumber>5.4.3.8</ecNumber>
    </recommendedName>
    <alternativeName>
        <fullName>Glutamate-1-semialdehyde aminotransferase</fullName>
        <shortName>GSA-AT</shortName>
    </alternativeName>
</protein>